<feature type="chain" id="PRO_0000269734" description="Putrescine aminotransferase">
    <location>
        <begin position="1"/>
        <end position="459"/>
    </location>
</feature>
<feature type="binding site" description="in other chain" evidence="1">
    <location>
        <begin position="150"/>
        <end position="151"/>
    </location>
    <ligand>
        <name>pyridoxal 5'-phosphate</name>
        <dbReference type="ChEBI" id="CHEBI:597326"/>
        <note>ligand shared between dimeric partners</note>
    </ligand>
</feature>
<feature type="binding site" description="in other chain" evidence="1">
    <location>
        <position position="274"/>
    </location>
    <ligand>
        <name>pyridoxal 5'-phosphate</name>
        <dbReference type="ChEBI" id="CHEBI:597326"/>
        <note>ligand shared between dimeric partners</note>
    </ligand>
</feature>
<feature type="binding site" evidence="1">
    <location>
        <position position="332"/>
    </location>
    <ligand>
        <name>pyridoxal 5'-phosphate</name>
        <dbReference type="ChEBI" id="CHEBI:597326"/>
        <note>ligand shared between dimeric partners</note>
    </ligand>
</feature>
<feature type="modified residue" description="N6-(pyridoxal phosphate)lysine" evidence="1">
    <location>
        <position position="300"/>
    </location>
</feature>
<name>PAT_SALPA</name>
<dbReference type="EC" id="2.6.1.82" evidence="1"/>
<dbReference type="EC" id="2.6.1.29" evidence="1"/>
<dbReference type="EMBL" id="CP000026">
    <property type="protein sequence ID" value="AAV78920.1"/>
    <property type="status" value="ALT_INIT"/>
    <property type="molecule type" value="Genomic_DNA"/>
</dbReference>
<dbReference type="SMR" id="Q5PC95"/>
<dbReference type="KEGG" id="spt:SPA3086"/>
<dbReference type="HOGENOM" id="CLU_016922_10_0_6"/>
<dbReference type="UniPathway" id="UPA00188">
    <property type="reaction ID" value="UER00290"/>
</dbReference>
<dbReference type="Proteomes" id="UP000008185">
    <property type="component" value="Chromosome"/>
</dbReference>
<dbReference type="GO" id="GO:0019161">
    <property type="term" value="F:diamine transaminase activity"/>
    <property type="evidence" value="ECO:0007669"/>
    <property type="project" value="UniProtKB-EC"/>
</dbReference>
<dbReference type="GO" id="GO:0042802">
    <property type="term" value="F:identical protein binding"/>
    <property type="evidence" value="ECO:0007669"/>
    <property type="project" value="TreeGrafter"/>
</dbReference>
<dbReference type="GO" id="GO:0033094">
    <property type="term" value="F:putrescine--2-oxoglutarate transaminase activity"/>
    <property type="evidence" value="ECO:0007669"/>
    <property type="project" value="UniProtKB-UniRule"/>
</dbReference>
<dbReference type="GO" id="GO:0030170">
    <property type="term" value="F:pyridoxal phosphate binding"/>
    <property type="evidence" value="ECO:0007669"/>
    <property type="project" value="UniProtKB-UniRule"/>
</dbReference>
<dbReference type="GO" id="GO:0019477">
    <property type="term" value="P:L-lysine catabolic process"/>
    <property type="evidence" value="ECO:0007669"/>
    <property type="project" value="UniProtKB-UniRule"/>
</dbReference>
<dbReference type="GO" id="GO:0009447">
    <property type="term" value="P:putrescine catabolic process"/>
    <property type="evidence" value="ECO:0007669"/>
    <property type="project" value="UniProtKB-UniRule"/>
</dbReference>
<dbReference type="CDD" id="cd00610">
    <property type="entry name" value="OAT_like"/>
    <property type="match status" value="1"/>
</dbReference>
<dbReference type="FunFam" id="3.40.640.10:FF:000004">
    <property type="entry name" value="Acetylornithine aminotransferase"/>
    <property type="match status" value="1"/>
</dbReference>
<dbReference type="Gene3D" id="3.90.1150.10">
    <property type="entry name" value="Aspartate Aminotransferase, domain 1"/>
    <property type="match status" value="1"/>
</dbReference>
<dbReference type="Gene3D" id="3.40.640.10">
    <property type="entry name" value="Type I PLP-dependent aspartate aminotransferase-like (Major domain)"/>
    <property type="match status" value="1"/>
</dbReference>
<dbReference type="HAMAP" id="MF_01276">
    <property type="entry name" value="Putres_aminotrans_3"/>
    <property type="match status" value="1"/>
</dbReference>
<dbReference type="InterPro" id="IPR005814">
    <property type="entry name" value="Aminotrans_3"/>
</dbReference>
<dbReference type="InterPro" id="IPR049704">
    <property type="entry name" value="Aminotrans_3_PPA_site"/>
</dbReference>
<dbReference type="InterPro" id="IPR050103">
    <property type="entry name" value="Class-III_PLP-dep_AT"/>
</dbReference>
<dbReference type="InterPro" id="IPR017747">
    <property type="entry name" value="Putrescine_aminotransferase"/>
</dbReference>
<dbReference type="InterPro" id="IPR015424">
    <property type="entry name" value="PyrdxlP-dep_Trfase"/>
</dbReference>
<dbReference type="InterPro" id="IPR015421">
    <property type="entry name" value="PyrdxlP-dep_Trfase_major"/>
</dbReference>
<dbReference type="InterPro" id="IPR015422">
    <property type="entry name" value="PyrdxlP-dep_Trfase_small"/>
</dbReference>
<dbReference type="NCBIfam" id="NF008570">
    <property type="entry name" value="PRK11522.1"/>
    <property type="match status" value="1"/>
</dbReference>
<dbReference type="NCBIfam" id="TIGR03372">
    <property type="entry name" value="putres_am_tran"/>
    <property type="match status" value="1"/>
</dbReference>
<dbReference type="PANTHER" id="PTHR11986">
    <property type="entry name" value="AMINOTRANSFERASE CLASS III"/>
    <property type="match status" value="1"/>
</dbReference>
<dbReference type="PANTHER" id="PTHR11986:SF112">
    <property type="entry name" value="PUTRESCINE AMINOTRANSFERASE"/>
    <property type="match status" value="1"/>
</dbReference>
<dbReference type="Pfam" id="PF00202">
    <property type="entry name" value="Aminotran_3"/>
    <property type="match status" value="1"/>
</dbReference>
<dbReference type="PIRSF" id="PIRSF000521">
    <property type="entry name" value="Transaminase_4ab_Lys_Orn"/>
    <property type="match status" value="1"/>
</dbReference>
<dbReference type="SUPFAM" id="SSF53383">
    <property type="entry name" value="PLP-dependent transferases"/>
    <property type="match status" value="1"/>
</dbReference>
<dbReference type="PROSITE" id="PS00600">
    <property type="entry name" value="AA_TRANSFER_CLASS_3"/>
    <property type="match status" value="1"/>
</dbReference>
<keyword id="KW-0032">Aminotransferase</keyword>
<keyword id="KW-0663">Pyridoxal phosphate</keyword>
<keyword id="KW-0808">Transferase</keyword>
<gene>
    <name evidence="1" type="primary">patA</name>
    <name type="ordered locus">SPA3086</name>
</gene>
<proteinExistence type="inferred from homology"/>
<protein>
    <recommendedName>
        <fullName evidence="1">Putrescine aminotransferase</fullName>
        <shortName evidence="1">PAT</shortName>
        <shortName evidence="1">PATase</shortName>
        <ecNumber evidence="1">2.6.1.82</ecNumber>
    </recommendedName>
    <alternativeName>
        <fullName evidence="1">Cadaverine transaminase</fullName>
    </alternativeName>
    <alternativeName>
        <fullName evidence="1">Diamine transaminase</fullName>
        <ecNumber evidence="1">2.6.1.29</ecNumber>
    </alternativeName>
    <alternativeName>
        <fullName evidence="1">Putrescine transaminase</fullName>
    </alternativeName>
    <alternativeName>
        <fullName evidence="1">Putrescine--2-oxoglutaric acid transaminase</fullName>
    </alternativeName>
</protein>
<evidence type="ECO:0000255" key="1">
    <source>
        <dbReference type="HAMAP-Rule" id="MF_01276"/>
    </source>
</evidence>
<evidence type="ECO:0000305" key="2"/>
<accession>Q5PC95</accession>
<sequence length="459" mass="49739">MNRLPSSASALACSAHALNLIEKRTLNHEEMKALNREVIDYFKEHVNPGFLEYRKSVTAGGDYGAVEWQAGSLNTLVDTQGQEFIDCLGGFGIFNVGHRNPVVVSAVQNQLAKQPLHSQELLDPLRAMLAKTLAALTPGKLKYSFFCNSGTESVEAALKLAKAYQSPRGKFTFIATSGAFHGKSLGALSATAKSTFRRPFMPLLPGFRHVPFGNIDAMSMAFSEGKKTGDEIAAVILEPIQGEGGVILPPQGYLTEVRKLCDEFGALMILDEVQTGMGRTGKMFACEHENVQPDILCLAKALGGGVMPIGATIATEEVFSVLFDNPFLHTTTFGGNPLACAAALATINVLLEQNLPAQAEQKGDTLLDSFRQLAREYPNLVHEARGKGMLMAIEFVDNETGYRFASEMFRQRVLVAGTLNNAKTIRIEPPLTLTIELCEQVLKSARNALAAMQVSVEEV</sequence>
<organism>
    <name type="scientific">Salmonella paratyphi A (strain ATCC 9150 / SARB42)</name>
    <dbReference type="NCBI Taxonomy" id="295319"/>
    <lineage>
        <taxon>Bacteria</taxon>
        <taxon>Pseudomonadati</taxon>
        <taxon>Pseudomonadota</taxon>
        <taxon>Gammaproteobacteria</taxon>
        <taxon>Enterobacterales</taxon>
        <taxon>Enterobacteriaceae</taxon>
        <taxon>Salmonella</taxon>
    </lineage>
</organism>
<comment type="function">
    <text evidence="1">Catalyzes the aminotransferase reaction from putrescine to 2-oxoglutarate, leading to glutamate and 4-aminobutanal, which spontaneously cyclizes to form 1-pyrroline. This is the first step in one of two pathways for putrescine degradation, where putrescine is converted into 4-aminobutanoate (gamma-aminobutyrate or GABA) via 4-aminobutanal. Also functions as a cadaverine transaminase in a a L-lysine degradation pathway to succinate that proceeds via cadaverine, glutarate and L-2-hydroxyglutarate.</text>
</comment>
<comment type="catalytic activity">
    <reaction evidence="1">
        <text>an alkane-alpha,omega-diamine + 2-oxoglutarate = an omega-aminoaldehyde + L-glutamate</text>
        <dbReference type="Rhea" id="RHEA:18217"/>
        <dbReference type="Rhea" id="RHEA-COMP:9766"/>
        <dbReference type="Rhea" id="RHEA-COMP:12750"/>
        <dbReference type="ChEBI" id="CHEBI:16810"/>
        <dbReference type="ChEBI" id="CHEBI:29985"/>
        <dbReference type="ChEBI" id="CHEBI:70977"/>
        <dbReference type="ChEBI" id="CHEBI:133427"/>
        <dbReference type="EC" id="2.6.1.29"/>
    </reaction>
    <physiologicalReaction direction="left-to-right" evidence="1">
        <dbReference type="Rhea" id="RHEA:18218"/>
    </physiologicalReaction>
</comment>
<comment type="catalytic activity">
    <reaction evidence="1">
        <text>putrescine + 2-oxoglutarate = 1-pyrroline + L-glutamate + H2O</text>
        <dbReference type="Rhea" id="RHEA:12268"/>
        <dbReference type="ChEBI" id="CHEBI:15377"/>
        <dbReference type="ChEBI" id="CHEBI:16810"/>
        <dbReference type="ChEBI" id="CHEBI:29985"/>
        <dbReference type="ChEBI" id="CHEBI:36781"/>
        <dbReference type="ChEBI" id="CHEBI:326268"/>
        <dbReference type="EC" id="2.6.1.82"/>
    </reaction>
    <physiologicalReaction direction="left-to-right" evidence="1">
        <dbReference type="Rhea" id="RHEA:12269"/>
    </physiologicalReaction>
</comment>
<comment type="catalytic activity">
    <reaction evidence="1">
        <text>cadaverine + 2-oxoglutarate = 5-aminopentanal + L-glutamate</text>
        <dbReference type="Rhea" id="RHEA:61624"/>
        <dbReference type="ChEBI" id="CHEBI:16810"/>
        <dbReference type="ChEBI" id="CHEBI:29985"/>
        <dbReference type="ChEBI" id="CHEBI:58384"/>
        <dbReference type="ChEBI" id="CHEBI:144896"/>
    </reaction>
    <physiologicalReaction direction="left-to-right" evidence="1">
        <dbReference type="Rhea" id="RHEA:61625"/>
    </physiologicalReaction>
</comment>
<comment type="cofactor">
    <cofactor evidence="1">
        <name>pyridoxal 5'-phosphate</name>
        <dbReference type="ChEBI" id="CHEBI:597326"/>
    </cofactor>
</comment>
<comment type="pathway">
    <text evidence="1">Amine and polyamine degradation; putrescine degradation; 4-aminobutanal from putrescine (transaminase route): step 1/1.</text>
</comment>
<comment type="similarity">
    <text evidence="1">Belongs to the class-III pyridoxal-phosphate-dependent aminotransferase family. Putrescine aminotransferase subfamily.</text>
</comment>
<comment type="sequence caution" evidence="2">
    <conflict type="erroneous initiation">
        <sequence resource="EMBL-CDS" id="AAV78920"/>
    </conflict>
</comment>
<reference key="1">
    <citation type="journal article" date="2004" name="Nat. Genet.">
        <title>Comparison of genome degradation in Paratyphi A and Typhi, human-restricted serovars of Salmonella enterica that cause typhoid.</title>
        <authorList>
            <person name="McClelland M."/>
            <person name="Sanderson K.E."/>
            <person name="Clifton S.W."/>
            <person name="Latreille P."/>
            <person name="Porwollik S."/>
            <person name="Sabo A."/>
            <person name="Meyer R."/>
            <person name="Bieri T."/>
            <person name="Ozersky P."/>
            <person name="McLellan M."/>
            <person name="Harkins C.R."/>
            <person name="Wang C."/>
            <person name="Nguyen C."/>
            <person name="Berghoff A."/>
            <person name="Elliott G."/>
            <person name="Kohlberg S."/>
            <person name="Strong C."/>
            <person name="Du F."/>
            <person name="Carter J."/>
            <person name="Kremizki C."/>
            <person name="Layman D."/>
            <person name="Leonard S."/>
            <person name="Sun H."/>
            <person name="Fulton L."/>
            <person name="Nash W."/>
            <person name="Miner T."/>
            <person name="Minx P."/>
            <person name="Delehaunty K."/>
            <person name="Fronick C."/>
            <person name="Magrini V."/>
            <person name="Nhan M."/>
            <person name="Warren W."/>
            <person name="Florea L."/>
            <person name="Spieth J."/>
            <person name="Wilson R.K."/>
        </authorList>
    </citation>
    <scope>NUCLEOTIDE SEQUENCE [LARGE SCALE GENOMIC DNA]</scope>
    <source>
        <strain>ATCC 9150 / SARB42</strain>
    </source>
</reference>